<comment type="function">
    <text evidence="1 3 6">G-protein coupled receptor for 5-hydroxytryptamine (serotonin), a biogenic hormone that functions as a neurotransmitter, a hormone and a mitogen (PubMed:7680751). Also has a high affinity for tricyclic psychotropic drugs (PubMed:7680751). Ligand binding causes a conformation change that triggers signaling via guanine nucleotide-binding proteins (G proteins) and modulates the activity of downstream effectors. HTR6 is coupled to G(s) G alpha proteins and mediates activation of adenylate cyclase activity (By similarity). Controls pyramidal neurons migration during corticogenesis, through the regulation of CDK5 activity (By similarity). Is an activator of mTOR signaling (By similarity).</text>
</comment>
<comment type="subunit">
    <text evidence="1 3">Interacts with MTOR, RPTOR and NF1 (By similarity). Interacts with CDK5 (By similarity).</text>
</comment>
<comment type="interaction">
    <interactant intactId="EBI-21279242">
        <id>P31388</id>
    </interactant>
    <interactant intactId="EBI-349666">
        <id>P15205</id>
        <label>Map1b</label>
    </interactant>
    <organismsDiffer>false</organismsDiffer>
    <experiments>2</experiments>
</comment>
<comment type="subcellular location">
    <subcellularLocation>
        <location evidence="1">Cell membrane</location>
        <topology evidence="4">Multi-pass membrane protein</topology>
    </subcellularLocation>
</comment>
<comment type="tissue specificity">
    <text evidence="6 7">Localized exclusively in the central nervous system, predominantly in the corpus striatum but also in various limbic and cortical regions.</text>
</comment>
<comment type="domain">
    <text evidence="2">Specificity for G(s) G alpha proteins is determined by the length of transmembrane regions 5 and 6 (TM5 and TM6).</text>
</comment>
<comment type="similarity">
    <text evidence="5">Belongs to the G-protein coupled receptor 1 family.</text>
</comment>
<feature type="chain" id="PRO_0000068977" description="5-hydroxytryptamine receptor 6">
    <location>
        <begin position="1"/>
        <end position="436"/>
    </location>
</feature>
<feature type="topological domain" description="Extracellular" evidence="1">
    <location>
        <begin position="1"/>
        <end position="27"/>
    </location>
</feature>
<feature type="transmembrane region" description="Helical; Name=1" evidence="1">
    <location>
        <begin position="28"/>
        <end position="52"/>
    </location>
</feature>
<feature type="topological domain" description="Cytoplasmic" evidence="1">
    <location>
        <begin position="53"/>
        <end position="62"/>
    </location>
</feature>
<feature type="transmembrane region" description="Helical; Name=2" evidence="1">
    <location>
        <begin position="63"/>
        <end position="88"/>
    </location>
</feature>
<feature type="topological domain" description="Extracellular" evidence="1">
    <location>
        <begin position="89"/>
        <end position="96"/>
    </location>
</feature>
<feature type="transmembrane region" description="Helical; Name=3" evidence="1">
    <location>
        <begin position="97"/>
        <end position="122"/>
    </location>
</feature>
<feature type="topological domain" description="Cytoplasmic" evidence="1">
    <location>
        <begin position="123"/>
        <end position="142"/>
    </location>
</feature>
<feature type="transmembrane region" description="Helical; Name=4" evidence="1">
    <location>
        <begin position="143"/>
        <end position="167"/>
    </location>
</feature>
<feature type="topological domain" description="Extracellular" evidence="1">
    <location>
        <begin position="168"/>
        <end position="185"/>
    </location>
</feature>
<feature type="transmembrane region" description="Helical; Name=5" evidence="1">
    <location>
        <begin position="186"/>
        <end position="209"/>
    </location>
</feature>
<feature type="topological domain" description="Cytoplasmic" evidence="1">
    <location>
        <begin position="210"/>
        <end position="266"/>
    </location>
</feature>
<feature type="transmembrane region" description="Helical; Name=6" evidence="1">
    <location>
        <begin position="267"/>
        <end position="293"/>
    </location>
</feature>
<feature type="topological domain" description="Extracellular" evidence="1">
    <location>
        <begin position="294"/>
        <end position="299"/>
    </location>
</feature>
<feature type="transmembrane region" description="Helical; Name=7" evidence="1">
    <location>
        <begin position="300"/>
        <end position="323"/>
    </location>
</feature>
<feature type="topological domain" description="Cytoplasmic" evidence="1">
    <location>
        <begin position="324"/>
        <end position="436"/>
    </location>
</feature>
<feature type="binding site" evidence="1">
    <location>
        <position position="106"/>
    </location>
    <ligand>
        <name>serotonin</name>
        <dbReference type="ChEBI" id="CHEBI:350546"/>
    </ligand>
</feature>
<feature type="binding site" evidence="1">
    <location>
        <position position="288"/>
    </location>
    <ligand>
        <name>serotonin</name>
        <dbReference type="ChEBI" id="CHEBI:350546"/>
    </ligand>
</feature>
<feature type="glycosylation site" description="N-linked (GlcNAc...) asparagine" evidence="4">
    <location>
        <position position="9"/>
    </location>
</feature>
<feature type="disulfide bond" evidence="5">
    <location>
        <begin position="99"/>
        <end position="180"/>
    </location>
</feature>
<feature type="sequence conflict" description="In Ref. 1; AAA40618." evidence="8" ref="1">
    <original>L</original>
    <variation>V</variation>
    <location>
        <position position="57"/>
    </location>
</feature>
<feature type="sequence conflict" description="In Ref. 1; AAA40618." evidence="8" ref="1">
    <original>PCVHCPPEHRPALPPPPCGPLTAVPDQASACSRCCLCLCRQTQIQTPLQGAPRACSSQPSFCCLERPPGTPRHPPGPPLWSTSLSQTLWSLRYGRIHSVPP</original>
    <variation>HASTVPRSTGQPCLPLHVDLSQRCQTRPQLQQVLALPLPPNSDSDSASGGTSGLQLTAQLLLPGEATRDPPPPTRATTVVNFFVTDSVEPEIRPHPLSSPVN</variation>
    <location>
        <begin position="336"/>
        <end position="436"/>
    </location>
</feature>
<organism>
    <name type="scientific">Rattus norvegicus</name>
    <name type="common">Rat</name>
    <dbReference type="NCBI Taxonomy" id="10116"/>
    <lineage>
        <taxon>Eukaryota</taxon>
        <taxon>Metazoa</taxon>
        <taxon>Chordata</taxon>
        <taxon>Craniata</taxon>
        <taxon>Vertebrata</taxon>
        <taxon>Euteleostomi</taxon>
        <taxon>Mammalia</taxon>
        <taxon>Eutheria</taxon>
        <taxon>Euarchontoglires</taxon>
        <taxon>Glires</taxon>
        <taxon>Rodentia</taxon>
        <taxon>Myomorpha</taxon>
        <taxon>Muroidea</taxon>
        <taxon>Muridae</taxon>
        <taxon>Murinae</taxon>
        <taxon>Rattus</taxon>
    </lineage>
</organism>
<proteinExistence type="evidence at protein level"/>
<evidence type="ECO:0000250" key="1">
    <source>
        <dbReference type="UniProtKB" id="P50406"/>
    </source>
</evidence>
<evidence type="ECO:0000250" key="2">
    <source>
        <dbReference type="UniProtKB" id="Q13639"/>
    </source>
</evidence>
<evidence type="ECO:0000250" key="3">
    <source>
        <dbReference type="UniProtKB" id="Q9R1C8"/>
    </source>
</evidence>
<evidence type="ECO:0000255" key="4"/>
<evidence type="ECO:0000255" key="5">
    <source>
        <dbReference type="PROSITE-ProRule" id="PRU00521"/>
    </source>
</evidence>
<evidence type="ECO:0000269" key="6">
    <source>
    </source>
</evidence>
<evidence type="ECO:0000269" key="7">
    <source>
    </source>
</evidence>
<evidence type="ECO:0000305" key="8"/>
<reference key="1">
    <citation type="journal article" date="1993" name="Mol. Pharmacol.">
        <title>Cloning and expression of a novel serotonin receptor with high affinity for tricyclic psychotropic drugs.</title>
        <authorList>
            <person name="Monsma F.J. Jr."/>
            <person name="Shen Y."/>
            <person name="Ward R.P."/>
            <person name="Hamblin M.W."/>
            <person name="Sibley D.R."/>
        </authorList>
    </citation>
    <scope>NUCLEOTIDE SEQUENCE [MRNA]</scope>
    <scope>FUNCTION</scope>
    <scope>TISSUE SPECIFICITY</scope>
    <source>
        <strain>Sprague-Dawley</strain>
        <tissue>Corpus striatum</tissue>
    </source>
</reference>
<reference key="2">
    <citation type="journal article" date="1993" name="Biochem. Biophys. Res. Commun.">
        <title>A novel rat serotonin (5-HT6) receptor: molecular cloning, localization and stimulation of cAMP accumulation.</title>
        <authorList>
            <person name="Ruat M."/>
            <person name="Traiffort E."/>
            <person name="Arrang J.-M."/>
            <person name="Tardivel-Lacombe J."/>
            <person name="Diaz J."/>
            <person name="Leurs R."/>
            <person name="Schwartz J.-C."/>
        </authorList>
    </citation>
    <scope>NUCLEOTIDE SEQUENCE [MRNA]</scope>
    <scope>TISSUE SPECIFICITY</scope>
</reference>
<reference key="3">
    <citation type="submission" date="1993-06" db="EMBL/GenBank/DDBJ databases">
        <title>A novel rat serotonin (5HT6) receptor.</title>
        <authorList>
            <person name="Martial R."/>
        </authorList>
    </citation>
    <scope>NUCLEOTIDE SEQUENCE [MRNA]</scope>
    <source>
        <strain>Wistar</strain>
    </source>
</reference>
<reference key="4">
    <citation type="journal article" date="2006" name="Proc. Natl. Acad. Sci. U.S.A.">
        <title>Quantitative phosphoproteomics of vasopressin-sensitive renal cells: regulation of aquaporin-2 phosphorylation at two sites.</title>
        <authorList>
            <person name="Hoffert J.D."/>
            <person name="Pisitkun T."/>
            <person name="Wang G."/>
            <person name="Shen R.-F."/>
            <person name="Knepper M.A."/>
        </authorList>
    </citation>
    <scope>IDENTIFICATION BY MASS SPECTROMETRY [LARGE SCALE ANALYSIS]</scope>
</reference>
<protein>
    <recommendedName>
        <fullName>5-hydroxytryptamine receptor 6</fullName>
        <shortName>5-HT-6</shortName>
        <shortName>5-HT6</shortName>
    </recommendedName>
    <alternativeName>
        <fullName>ST-B17</fullName>
    </alternativeName>
    <alternativeName>
        <fullName>Serotonin receptor 6</fullName>
    </alternativeName>
</protein>
<keyword id="KW-1003">Cell membrane</keyword>
<keyword id="KW-1015">Disulfide bond</keyword>
<keyword id="KW-0297">G-protein coupled receptor</keyword>
<keyword id="KW-0325">Glycoprotein</keyword>
<keyword id="KW-0472">Membrane</keyword>
<keyword id="KW-0675">Receptor</keyword>
<keyword id="KW-1185">Reference proteome</keyword>
<keyword id="KW-0807">Transducer</keyword>
<keyword id="KW-0812">Transmembrane</keyword>
<keyword id="KW-1133">Transmembrane helix</keyword>
<gene>
    <name type="primary">Htr6</name>
</gene>
<dbReference type="EMBL" id="L03202">
    <property type="protein sequence ID" value="AAA40618.1"/>
    <property type="molecule type" value="mRNA"/>
</dbReference>
<dbReference type="EMBL" id="S62043">
    <property type="protein sequence ID" value="AAB26908.1"/>
    <property type="molecule type" value="mRNA"/>
</dbReference>
<dbReference type="EMBL" id="L19656">
    <property type="protein sequence ID" value="AAA40611.1"/>
    <property type="molecule type" value="mRNA"/>
</dbReference>
<dbReference type="PIR" id="I57942">
    <property type="entry name" value="I57942"/>
</dbReference>
<dbReference type="PIR" id="JN0591">
    <property type="entry name" value="JN0591"/>
</dbReference>
<dbReference type="SMR" id="P31388"/>
<dbReference type="BioGRID" id="249039">
    <property type="interactions" value="2"/>
</dbReference>
<dbReference type="CORUM" id="P31388"/>
<dbReference type="FunCoup" id="P31388">
    <property type="interactions" value="114"/>
</dbReference>
<dbReference type="IntAct" id="P31388">
    <property type="interactions" value="3"/>
</dbReference>
<dbReference type="STRING" id="10116.ENSRNOP00000070830"/>
<dbReference type="BindingDB" id="P31388"/>
<dbReference type="ChEMBL" id="CHEMBL3372"/>
<dbReference type="DrugCentral" id="P31388"/>
<dbReference type="GuidetoPHARMACOLOGY" id="11"/>
<dbReference type="GlyCosmos" id="P31388">
    <property type="glycosylation" value="1 site, No reported glycans"/>
</dbReference>
<dbReference type="GlyGen" id="P31388">
    <property type="glycosylation" value="1 site"/>
</dbReference>
<dbReference type="iPTMnet" id="P31388"/>
<dbReference type="PhosphoSitePlus" id="P31388"/>
<dbReference type="PaxDb" id="10116-ENSRNOP00000064366"/>
<dbReference type="AGR" id="RGD:62044"/>
<dbReference type="RGD" id="62044">
    <property type="gene designation" value="Htr6"/>
</dbReference>
<dbReference type="VEuPathDB" id="HostDB:ENSRNOG00000049761"/>
<dbReference type="eggNOG" id="KOG3656">
    <property type="taxonomic scope" value="Eukaryota"/>
</dbReference>
<dbReference type="InParanoid" id="P31388"/>
<dbReference type="Reactome" id="R-RNO-390666">
    <property type="pathway name" value="Serotonin receptors"/>
</dbReference>
<dbReference type="PRO" id="PR:P31388"/>
<dbReference type="Proteomes" id="UP000002494">
    <property type="component" value="Chromosome 5"/>
</dbReference>
<dbReference type="Bgee" id="ENSRNOG00000049761">
    <property type="expression patterns" value="Expressed in frontal cortex"/>
</dbReference>
<dbReference type="ExpressionAtlas" id="P31388">
    <property type="expression patterns" value="baseline and differential"/>
</dbReference>
<dbReference type="GO" id="GO:0005929">
    <property type="term" value="C:cilium"/>
    <property type="evidence" value="ECO:0000266"/>
    <property type="project" value="RGD"/>
</dbReference>
<dbReference type="GO" id="GO:0030425">
    <property type="term" value="C:dendrite"/>
    <property type="evidence" value="ECO:0000314"/>
    <property type="project" value="RGD"/>
</dbReference>
<dbReference type="GO" id="GO:0005886">
    <property type="term" value="C:plasma membrane"/>
    <property type="evidence" value="ECO:0000250"/>
    <property type="project" value="UniProtKB"/>
</dbReference>
<dbReference type="GO" id="GO:0045202">
    <property type="term" value="C:synapse"/>
    <property type="evidence" value="ECO:0007669"/>
    <property type="project" value="GOC"/>
</dbReference>
<dbReference type="GO" id="GO:0004993">
    <property type="term" value="F:G protein-coupled serotonin receptor activity"/>
    <property type="evidence" value="ECO:0000314"/>
    <property type="project" value="RGD"/>
</dbReference>
<dbReference type="GO" id="GO:0030594">
    <property type="term" value="F:neurotransmitter receptor activity"/>
    <property type="evidence" value="ECO:0000318"/>
    <property type="project" value="GO_Central"/>
</dbReference>
<dbReference type="GO" id="GO:0099589">
    <property type="term" value="F:serotonin receptor activity"/>
    <property type="evidence" value="ECO:0000266"/>
    <property type="project" value="RGD"/>
</dbReference>
<dbReference type="GO" id="GO:0007192">
    <property type="term" value="P:adenylate cyclase-activating serotonin receptor signaling pathway"/>
    <property type="evidence" value="ECO:0000250"/>
    <property type="project" value="UniProtKB"/>
</dbReference>
<dbReference type="GO" id="GO:0007188">
    <property type="term" value="P:adenylate cyclase-modulating G protein-coupled receptor signaling pathway"/>
    <property type="evidence" value="ECO:0000318"/>
    <property type="project" value="GO_Central"/>
</dbReference>
<dbReference type="GO" id="GO:0021795">
    <property type="term" value="P:cerebral cortex cell migration"/>
    <property type="evidence" value="ECO:0000250"/>
    <property type="project" value="UniProtKB"/>
</dbReference>
<dbReference type="GO" id="GO:0007268">
    <property type="term" value="P:chemical synaptic transmission"/>
    <property type="evidence" value="ECO:0000318"/>
    <property type="project" value="GO_Central"/>
</dbReference>
<dbReference type="GO" id="GO:0007187">
    <property type="term" value="P:G protein-coupled receptor signaling pathway, coupled to cyclic nucleotide second messenger"/>
    <property type="evidence" value="ECO:0000315"/>
    <property type="project" value="RGD"/>
</dbReference>
<dbReference type="GO" id="GO:0007612">
    <property type="term" value="P:learning"/>
    <property type="evidence" value="ECO:0000314"/>
    <property type="project" value="RGD"/>
</dbReference>
<dbReference type="GO" id="GO:0060291">
    <property type="term" value="P:long-term synaptic potentiation"/>
    <property type="evidence" value="ECO:0000315"/>
    <property type="project" value="RGD"/>
</dbReference>
<dbReference type="GO" id="GO:0014058">
    <property type="term" value="P:negative regulation of acetylcholine secretion, neurotransmission"/>
    <property type="evidence" value="ECO:0000315"/>
    <property type="project" value="RGD"/>
</dbReference>
<dbReference type="GO" id="GO:0014053">
    <property type="term" value="P:negative regulation of gamma-aminobutyric acid secretion"/>
    <property type="evidence" value="ECO:0000315"/>
    <property type="project" value="RGD"/>
</dbReference>
<dbReference type="GO" id="GO:0014050">
    <property type="term" value="P:negative regulation of glutamate secretion"/>
    <property type="evidence" value="ECO:0000315"/>
    <property type="project" value="RGD"/>
</dbReference>
<dbReference type="GO" id="GO:0033603">
    <property type="term" value="P:positive regulation of dopamine secretion"/>
    <property type="evidence" value="ECO:0000315"/>
    <property type="project" value="RGD"/>
</dbReference>
<dbReference type="GO" id="GO:0014054">
    <property type="term" value="P:positive regulation of gamma-aminobutyric acid secretion"/>
    <property type="evidence" value="ECO:0000315"/>
    <property type="project" value="RGD"/>
</dbReference>
<dbReference type="GO" id="GO:0032008">
    <property type="term" value="P:positive regulation of TOR signaling"/>
    <property type="evidence" value="ECO:0000250"/>
    <property type="project" value="UniProtKB"/>
</dbReference>
<dbReference type="GO" id="GO:0032355">
    <property type="term" value="P:response to estradiol"/>
    <property type="evidence" value="ECO:0000270"/>
    <property type="project" value="RGD"/>
</dbReference>
<dbReference type="GO" id="GO:0009410">
    <property type="term" value="P:response to xenobiotic stimulus"/>
    <property type="evidence" value="ECO:0000270"/>
    <property type="project" value="RGD"/>
</dbReference>
<dbReference type="CDD" id="cd15054">
    <property type="entry name" value="7tmA_5-HT6"/>
    <property type="match status" value="1"/>
</dbReference>
<dbReference type="FunFam" id="1.20.1070.10:FF:000148">
    <property type="entry name" value="5-hydroxytryptamine receptor 6"/>
    <property type="match status" value="1"/>
</dbReference>
<dbReference type="Gene3D" id="1.20.1070.10">
    <property type="entry name" value="Rhodopsin 7-helix transmembrane proteins"/>
    <property type="match status" value="1"/>
</dbReference>
<dbReference type="InterPro" id="IPR002232">
    <property type="entry name" value="5HT6_rcpt"/>
</dbReference>
<dbReference type="InterPro" id="IPR000276">
    <property type="entry name" value="GPCR_Rhodpsn"/>
</dbReference>
<dbReference type="InterPro" id="IPR017452">
    <property type="entry name" value="GPCR_Rhodpsn_7TM"/>
</dbReference>
<dbReference type="PANTHER" id="PTHR24247">
    <property type="entry name" value="5-HYDROXYTRYPTAMINE RECEPTOR"/>
    <property type="match status" value="1"/>
</dbReference>
<dbReference type="PANTHER" id="PTHR24247:SF236">
    <property type="entry name" value="5-HYDROXYTRYPTAMINE RECEPTOR 6"/>
    <property type="match status" value="1"/>
</dbReference>
<dbReference type="Pfam" id="PF00001">
    <property type="entry name" value="7tm_1"/>
    <property type="match status" value="1"/>
</dbReference>
<dbReference type="PRINTS" id="PR01102">
    <property type="entry name" value="5HT6RECEPTR"/>
</dbReference>
<dbReference type="PRINTS" id="PR00237">
    <property type="entry name" value="GPCRRHODOPSN"/>
</dbReference>
<dbReference type="SMART" id="SM01381">
    <property type="entry name" value="7TM_GPCR_Srsx"/>
    <property type="match status" value="1"/>
</dbReference>
<dbReference type="SUPFAM" id="SSF81321">
    <property type="entry name" value="Family A G protein-coupled receptor-like"/>
    <property type="match status" value="1"/>
</dbReference>
<dbReference type="PROSITE" id="PS00237">
    <property type="entry name" value="G_PROTEIN_RECEP_F1_1"/>
    <property type="match status" value="1"/>
</dbReference>
<dbReference type="PROSITE" id="PS50262">
    <property type="entry name" value="G_PROTEIN_RECEP_F1_2"/>
    <property type="match status" value="1"/>
</dbReference>
<name>5HT6R_RAT</name>
<sequence>MVPEPGPVNSSTPAWGPGPPPAPGGSGWVAAALCVVIVLTAAANSLLIVLICTQPALRNTSNFFLVSLFTSDLMVGLVVMPPAMLNALYGRWVLARGLCLLWTAFDVMCCSASILNLCLISLDRYLLILSPLRYKLRMTAPRALALILGAWSLAALASFLPLLLGWHELGKARTPAPGQCRLLASLPFVLVASGVTFFLPSGAICFTYCRILLAARKQAVQVASLTTGTAGQALETLQVPRTPRPGMESADSRRLATKHSRKALKASLTLGILLGMFFVTWLPFFVANIAQAVCDCISPGLFDVLTWLGYCNSTMNPIIYPLFMRDFKRALGRFLPCVHCPPEHRPALPPPPCGPLTAVPDQASACSRCCLCLCRQTQIQTPLQGAPRACSSQPSFCCLERPPGTPRHPPGPPLWSTSLSQTLWSLRYGRIHSVPP</sequence>
<accession>P31388</accession>